<feature type="signal peptide" evidence="1">
    <location>
        <begin position="1"/>
        <end position="18"/>
    </location>
</feature>
<feature type="chain" id="PRO_1000138270" description="LPS-assembly lipoprotein LptE">
    <location>
        <begin position="19"/>
        <end position="193"/>
    </location>
</feature>
<feature type="region of interest" description="Disordered" evidence="2">
    <location>
        <begin position="166"/>
        <end position="193"/>
    </location>
</feature>
<feature type="compositionally biased region" description="Low complexity" evidence="2">
    <location>
        <begin position="174"/>
        <end position="186"/>
    </location>
</feature>
<feature type="lipid moiety-binding region" description="N-palmitoyl cysteine" evidence="1">
    <location>
        <position position="19"/>
    </location>
</feature>
<feature type="lipid moiety-binding region" description="S-diacylglycerol cysteine" evidence="1">
    <location>
        <position position="19"/>
    </location>
</feature>
<name>LPTE_ECOLU</name>
<accession>B7N9P7</accession>
<reference key="1">
    <citation type="journal article" date="2009" name="PLoS Genet.">
        <title>Organised genome dynamics in the Escherichia coli species results in highly diverse adaptive paths.</title>
        <authorList>
            <person name="Touchon M."/>
            <person name="Hoede C."/>
            <person name="Tenaillon O."/>
            <person name="Barbe V."/>
            <person name="Baeriswyl S."/>
            <person name="Bidet P."/>
            <person name="Bingen E."/>
            <person name="Bonacorsi S."/>
            <person name="Bouchier C."/>
            <person name="Bouvet O."/>
            <person name="Calteau A."/>
            <person name="Chiapello H."/>
            <person name="Clermont O."/>
            <person name="Cruveiller S."/>
            <person name="Danchin A."/>
            <person name="Diard M."/>
            <person name="Dossat C."/>
            <person name="Karoui M.E."/>
            <person name="Frapy E."/>
            <person name="Garry L."/>
            <person name="Ghigo J.M."/>
            <person name="Gilles A.M."/>
            <person name="Johnson J."/>
            <person name="Le Bouguenec C."/>
            <person name="Lescat M."/>
            <person name="Mangenot S."/>
            <person name="Martinez-Jehanne V."/>
            <person name="Matic I."/>
            <person name="Nassif X."/>
            <person name="Oztas S."/>
            <person name="Petit M.A."/>
            <person name="Pichon C."/>
            <person name="Rouy Z."/>
            <person name="Ruf C.S."/>
            <person name="Schneider D."/>
            <person name="Tourret J."/>
            <person name="Vacherie B."/>
            <person name="Vallenet D."/>
            <person name="Medigue C."/>
            <person name="Rocha E.P.C."/>
            <person name="Denamur E."/>
        </authorList>
    </citation>
    <scope>NUCLEOTIDE SEQUENCE [LARGE SCALE GENOMIC DNA]</scope>
    <source>
        <strain>UMN026 / ExPEC</strain>
    </source>
</reference>
<protein>
    <recommendedName>
        <fullName evidence="1">LPS-assembly lipoprotein LptE</fullName>
    </recommendedName>
</protein>
<proteinExistence type="inferred from homology"/>
<dbReference type="EMBL" id="CU928163">
    <property type="protein sequence ID" value="CAR11948.1"/>
    <property type="molecule type" value="Genomic_DNA"/>
</dbReference>
<dbReference type="RefSeq" id="WP_001269673.1">
    <property type="nucleotide sequence ID" value="NC_011751.1"/>
</dbReference>
<dbReference type="RefSeq" id="YP_002411494.1">
    <property type="nucleotide sequence ID" value="NC_011751.1"/>
</dbReference>
<dbReference type="SMR" id="B7N9P7"/>
<dbReference type="STRING" id="585056.ECUMN_0735"/>
<dbReference type="GeneID" id="93776841"/>
<dbReference type="KEGG" id="eum:ECUMN_0735"/>
<dbReference type="PATRIC" id="fig|585056.7.peg.933"/>
<dbReference type="HOGENOM" id="CLU_103309_1_1_6"/>
<dbReference type="Proteomes" id="UP000007097">
    <property type="component" value="Chromosome"/>
</dbReference>
<dbReference type="GO" id="GO:0009279">
    <property type="term" value="C:cell outer membrane"/>
    <property type="evidence" value="ECO:0007669"/>
    <property type="project" value="UniProtKB-SubCell"/>
</dbReference>
<dbReference type="GO" id="GO:1990351">
    <property type="term" value="C:transporter complex"/>
    <property type="evidence" value="ECO:0007669"/>
    <property type="project" value="TreeGrafter"/>
</dbReference>
<dbReference type="GO" id="GO:0001530">
    <property type="term" value="F:lipopolysaccharide binding"/>
    <property type="evidence" value="ECO:0007669"/>
    <property type="project" value="TreeGrafter"/>
</dbReference>
<dbReference type="GO" id="GO:0043165">
    <property type="term" value="P:Gram-negative-bacterium-type cell outer membrane assembly"/>
    <property type="evidence" value="ECO:0007669"/>
    <property type="project" value="UniProtKB-UniRule"/>
</dbReference>
<dbReference type="GO" id="GO:0015920">
    <property type="term" value="P:lipopolysaccharide transport"/>
    <property type="evidence" value="ECO:0007669"/>
    <property type="project" value="TreeGrafter"/>
</dbReference>
<dbReference type="FunFam" id="3.30.160.150:FF:000001">
    <property type="entry name" value="LPS-assembly lipoprotein LptE"/>
    <property type="match status" value="1"/>
</dbReference>
<dbReference type="Gene3D" id="3.30.160.150">
    <property type="entry name" value="Lipoprotein like domain"/>
    <property type="match status" value="1"/>
</dbReference>
<dbReference type="HAMAP" id="MF_01186">
    <property type="entry name" value="LPS_assembly_LptE"/>
    <property type="match status" value="1"/>
</dbReference>
<dbReference type="InterPro" id="IPR007485">
    <property type="entry name" value="LPS_assembly_LptE"/>
</dbReference>
<dbReference type="NCBIfam" id="NF008062">
    <property type="entry name" value="PRK10796.1"/>
    <property type="match status" value="1"/>
</dbReference>
<dbReference type="PANTHER" id="PTHR38098">
    <property type="entry name" value="LPS-ASSEMBLY LIPOPROTEIN LPTE"/>
    <property type="match status" value="1"/>
</dbReference>
<dbReference type="PANTHER" id="PTHR38098:SF1">
    <property type="entry name" value="LPS-ASSEMBLY LIPOPROTEIN LPTE"/>
    <property type="match status" value="1"/>
</dbReference>
<dbReference type="Pfam" id="PF04390">
    <property type="entry name" value="LptE"/>
    <property type="match status" value="1"/>
</dbReference>
<dbReference type="PROSITE" id="PS51257">
    <property type="entry name" value="PROKAR_LIPOPROTEIN"/>
    <property type="match status" value="1"/>
</dbReference>
<gene>
    <name evidence="1" type="primary">lptE</name>
    <name type="synonym">rlpB</name>
    <name type="ordered locus">ECUMN_0735</name>
</gene>
<evidence type="ECO:0000255" key="1">
    <source>
        <dbReference type="HAMAP-Rule" id="MF_01186"/>
    </source>
</evidence>
<evidence type="ECO:0000256" key="2">
    <source>
        <dbReference type="SAM" id="MobiDB-lite"/>
    </source>
</evidence>
<organism>
    <name type="scientific">Escherichia coli O17:K52:H18 (strain UMN026 / ExPEC)</name>
    <dbReference type="NCBI Taxonomy" id="585056"/>
    <lineage>
        <taxon>Bacteria</taxon>
        <taxon>Pseudomonadati</taxon>
        <taxon>Pseudomonadota</taxon>
        <taxon>Gammaproteobacteria</taxon>
        <taxon>Enterobacterales</taxon>
        <taxon>Enterobacteriaceae</taxon>
        <taxon>Escherichia</taxon>
    </lineage>
</organism>
<keyword id="KW-0998">Cell outer membrane</keyword>
<keyword id="KW-0449">Lipoprotein</keyword>
<keyword id="KW-0472">Membrane</keyword>
<keyword id="KW-0564">Palmitate</keyword>
<keyword id="KW-0732">Signal</keyword>
<sequence>MRYLATLLLSLAVLITAGCGWHLRDTTQVPSTMKVMILDSGDPNGPLSRAVRNQLRLNGVELLDKETTRKDVPSLRLGKVSIAKDTASVFRNGQTAEYQMIMTVNATVLIPGRDIYPISAKVFRSFFDNPQMALAKDNEQDMIVKEMYDRAAEQLIRKLPSIRAADIRSDEEQTSTTTDTPATPARVSTTLGN</sequence>
<comment type="function">
    <text evidence="1">Together with LptD, is involved in the assembly of lipopolysaccharide (LPS) at the surface of the outer membrane. Required for the proper assembly of LptD. Binds LPS and may serve as the LPS recognition site at the outer membrane.</text>
</comment>
<comment type="subunit">
    <text evidence="1">Component of the lipopolysaccharide transport and assembly complex. Interacts with LptD.</text>
</comment>
<comment type="subcellular location">
    <subcellularLocation>
        <location evidence="1">Cell outer membrane</location>
        <topology evidence="1">Lipid-anchor</topology>
    </subcellularLocation>
</comment>
<comment type="similarity">
    <text evidence="1">Belongs to the LptE lipoprotein family.</text>
</comment>